<evidence type="ECO:0000269" key="1">
    <source>
    </source>
</evidence>
<evidence type="ECO:0000269" key="2">
    <source>
    </source>
</evidence>
<evidence type="ECO:0000305" key="3"/>
<name>RIBR_BACSU</name>
<proteinExistence type="evidence at transcript level"/>
<protein>
    <recommendedName>
        <fullName>RNA-binding riboflavin kinase RibR</fullName>
        <ecNumber>2.7.1.26</ecNumber>
    </recommendedName>
</protein>
<gene>
    <name type="primary">ribR</name>
    <name type="synonym">ytnK</name>
    <name type="ordered locus">BSU29300</name>
</gene>
<accession>P94465</accession>
<dbReference type="EC" id="2.7.1.26"/>
<dbReference type="EMBL" id="Y09721">
    <property type="protein sequence ID" value="CAA70887.1"/>
    <property type="molecule type" value="Genomic_DNA"/>
</dbReference>
<dbReference type="EMBL" id="AF008220">
    <property type="protein sequence ID" value="AAC00333.1"/>
    <property type="molecule type" value="Genomic_DNA"/>
</dbReference>
<dbReference type="EMBL" id="AL009126">
    <property type="protein sequence ID" value="CAB14890.1"/>
    <property type="molecule type" value="Genomic_DNA"/>
</dbReference>
<dbReference type="PIR" id="G69692">
    <property type="entry name" value="G69692"/>
</dbReference>
<dbReference type="RefSeq" id="NP_390808.1">
    <property type="nucleotide sequence ID" value="NC_000964.3"/>
</dbReference>
<dbReference type="RefSeq" id="WP_003229393.1">
    <property type="nucleotide sequence ID" value="NZ_OZ025638.1"/>
</dbReference>
<dbReference type="SMR" id="P94465"/>
<dbReference type="FunCoup" id="P94465">
    <property type="interactions" value="238"/>
</dbReference>
<dbReference type="STRING" id="224308.BSU29300"/>
<dbReference type="PaxDb" id="224308-BSU29300"/>
<dbReference type="EnsemblBacteria" id="CAB14890">
    <property type="protein sequence ID" value="CAB14890"/>
    <property type="gene ID" value="BSU_29300"/>
</dbReference>
<dbReference type="GeneID" id="937367"/>
<dbReference type="KEGG" id="bsu:BSU29300"/>
<dbReference type="PATRIC" id="fig|224308.179.peg.3184"/>
<dbReference type="eggNOG" id="COG0196">
    <property type="taxonomic scope" value="Bacteria"/>
</dbReference>
<dbReference type="InParanoid" id="P94465"/>
<dbReference type="OrthoDB" id="9803667at2"/>
<dbReference type="PhylomeDB" id="P94465"/>
<dbReference type="BioCyc" id="BSUB:BSU29300-MONOMER"/>
<dbReference type="Proteomes" id="UP000001570">
    <property type="component" value="Chromosome"/>
</dbReference>
<dbReference type="GO" id="GO:0005524">
    <property type="term" value="F:ATP binding"/>
    <property type="evidence" value="ECO:0007669"/>
    <property type="project" value="UniProtKB-KW"/>
</dbReference>
<dbReference type="GO" id="GO:0008531">
    <property type="term" value="F:riboflavin kinase activity"/>
    <property type="evidence" value="ECO:0007669"/>
    <property type="project" value="UniProtKB-EC"/>
</dbReference>
<dbReference type="GO" id="GO:0009231">
    <property type="term" value="P:riboflavin biosynthetic process"/>
    <property type="evidence" value="ECO:0007669"/>
    <property type="project" value="UniProtKB-KW"/>
</dbReference>
<dbReference type="Gene3D" id="2.40.30.30">
    <property type="entry name" value="Riboflavin kinase-like"/>
    <property type="match status" value="1"/>
</dbReference>
<dbReference type="InterPro" id="IPR023468">
    <property type="entry name" value="Riboflavin_kinase"/>
</dbReference>
<dbReference type="InterPro" id="IPR015865">
    <property type="entry name" value="Riboflavin_kinase_bac/euk"/>
</dbReference>
<dbReference type="InterPro" id="IPR023465">
    <property type="entry name" value="Riboflavin_kinase_dom_sf"/>
</dbReference>
<dbReference type="PANTHER" id="PTHR22749:SF6">
    <property type="entry name" value="RIBOFLAVIN KINASE"/>
    <property type="match status" value="1"/>
</dbReference>
<dbReference type="PANTHER" id="PTHR22749">
    <property type="entry name" value="RIBOFLAVIN KINASE/FMN ADENYLYLTRANSFERASE"/>
    <property type="match status" value="1"/>
</dbReference>
<dbReference type="Pfam" id="PF01687">
    <property type="entry name" value="Flavokinase"/>
    <property type="match status" value="1"/>
</dbReference>
<dbReference type="SMART" id="SM00904">
    <property type="entry name" value="Flavokinase"/>
    <property type="match status" value="1"/>
</dbReference>
<dbReference type="SUPFAM" id="SSF82114">
    <property type="entry name" value="Riboflavin kinase-like"/>
    <property type="match status" value="1"/>
</dbReference>
<comment type="function">
    <text evidence="1 2">May be directly involved in the regulation of the rib genes. C-terminal part of RibR specifically binds to RFN of the rib leader of the riboflavin biosynthetic operon. The RFN element is a sequence within the rib-leader mRNA reported to serve as a receptor for an FMN-dependent riboswitch. Possibly, RibR produces the comodulator FMN through its own N-terminal flavokinase activity. FMN-activated RibR may stabilize the anti-anti terminator structure of RFN mRNA, causing transcription termination of the rib genes in trans.</text>
</comment>
<comment type="catalytic activity">
    <reaction>
        <text>riboflavin + ATP = FMN + ADP + H(+)</text>
        <dbReference type="Rhea" id="RHEA:14357"/>
        <dbReference type="ChEBI" id="CHEBI:15378"/>
        <dbReference type="ChEBI" id="CHEBI:30616"/>
        <dbReference type="ChEBI" id="CHEBI:57986"/>
        <dbReference type="ChEBI" id="CHEBI:58210"/>
        <dbReference type="ChEBI" id="CHEBI:456216"/>
        <dbReference type="EC" id="2.7.1.26"/>
    </reaction>
</comment>
<comment type="induction">
    <text evidence="2">Repressed by the HTH-type transcriptional regulator CymR.</text>
</comment>
<comment type="disruption phenotype">
    <text evidence="1">Mutants lacking this gene are deregulated with respect to flavin (riboflavin, FMN and FAD) biosynthesis.</text>
</comment>
<comment type="miscellaneous">
    <text>Overexpression of RibR suppresses the riboflavin-overproducing ribC-defective phenotype, which is the major riboflavin kinase responsible of FMN biosynthesis by riboflavin phosphorylation (PubMed:15668000, PubMed:17590224).</text>
</comment>
<comment type="similarity">
    <text evidence="3">Belongs to the RibR family.</text>
</comment>
<organism>
    <name type="scientific">Bacillus subtilis (strain 168)</name>
    <dbReference type="NCBI Taxonomy" id="224308"/>
    <lineage>
        <taxon>Bacteria</taxon>
        <taxon>Bacillati</taxon>
        <taxon>Bacillota</taxon>
        <taxon>Bacilli</taxon>
        <taxon>Bacillales</taxon>
        <taxon>Bacillaceae</taxon>
        <taxon>Bacillus</taxon>
    </lineage>
</organism>
<keyword id="KW-0067">ATP-binding</keyword>
<keyword id="KW-0285">Flavoprotein</keyword>
<keyword id="KW-0288">FMN</keyword>
<keyword id="KW-0547">Nucleotide-binding</keyword>
<keyword id="KW-1185">Reference proteome</keyword>
<keyword id="KW-0686">Riboflavin biosynthesis</keyword>
<keyword id="KW-0808">Transferase</keyword>
<sequence>MTIIAGTVVKGKQLGRKLGFPTANVDAKIHGLRNGVYGVLATVNHQFHLGVMNIGVKPTVGSNLEKTLEIFLFDFHRDIYGEKIECSILFKIREERRFDSLESLTKQIKKDISCVAKRFELIGIMAPNKKESLLSHQELNLPDLCFYKKCNNLYGVNRGVYNVIDNWFFEYGITQVAYRRIYILSFLSFLKEDNPKVSSKYIRFGAGGLADKLNRFISSYVEESEENILG</sequence>
<feature type="chain" id="PRO_0000194147" description="RNA-binding riboflavin kinase RibR">
    <location>
        <begin position="1"/>
        <end position="230"/>
    </location>
</feature>
<reference key="1">
    <citation type="submission" date="1996-12" db="EMBL/GenBank/DDBJ databases">
        <authorList>
            <person name="Gusarov I."/>
        </authorList>
    </citation>
    <scope>NUCLEOTIDE SEQUENCE [GENOMIC DNA]</scope>
    <source>
        <strain>SB25</strain>
    </source>
</reference>
<reference key="2">
    <citation type="journal article" date="1997" name="Microbiology">
        <title>Sequencing and functional annotation of the Bacillus subtilis genes in the 200 kb rrnB-dnaB region.</title>
        <authorList>
            <person name="Lapidus A."/>
            <person name="Galleron N."/>
            <person name="Sorokin A."/>
            <person name="Ehrlich S.D."/>
        </authorList>
    </citation>
    <scope>NUCLEOTIDE SEQUENCE [GENOMIC DNA]</scope>
    <source>
        <strain>168</strain>
    </source>
</reference>
<reference key="3">
    <citation type="journal article" date="1997" name="Nature">
        <title>The complete genome sequence of the Gram-positive bacterium Bacillus subtilis.</title>
        <authorList>
            <person name="Kunst F."/>
            <person name="Ogasawara N."/>
            <person name="Moszer I."/>
            <person name="Albertini A.M."/>
            <person name="Alloni G."/>
            <person name="Azevedo V."/>
            <person name="Bertero M.G."/>
            <person name="Bessieres P."/>
            <person name="Bolotin A."/>
            <person name="Borchert S."/>
            <person name="Borriss R."/>
            <person name="Boursier L."/>
            <person name="Brans A."/>
            <person name="Braun M."/>
            <person name="Brignell S.C."/>
            <person name="Bron S."/>
            <person name="Brouillet S."/>
            <person name="Bruschi C.V."/>
            <person name="Caldwell B."/>
            <person name="Capuano V."/>
            <person name="Carter N.M."/>
            <person name="Choi S.-K."/>
            <person name="Codani J.-J."/>
            <person name="Connerton I.F."/>
            <person name="Cummings N.J."/>
            <person name="Daniel R.A."/>
            <person name="Denizot F."/>
            <person name="Devine K.M."/>
            <person name="Duesterhoeft A."/>
            <person name="Ehrlich S.D."/>
            <person name="Emmerson P.T."/>
            <person name="Entian K.-D."/>
            <person name="Errington J."/>
            <person name="Fabret C."/>
            <person name="Ferrari E."/>
            <person name="Foulger D."/>
            <person name="Fritz C."/>
            <person name="Fujita M."/>
            <person name="Fujita Y."/>
            <person name="Fuma S."/>
            <person name="Galizzi A."/>
            <person name="Galleron N."/>
            <person name="Ghim S.-Y."/>
            <person name="Glaser P."/>
            <person name="Goffeau A."/>
            <person name="Golightly E.J."/>
            <person name="Grandi G."/>
            <person name="Guiseppi G."/>
            <person name="Guy B.J."/>
            <person name="Haga K."/>
            <person name="Haiech J."/>
            <person name="Harwood C.R."/>
            <person name="Henaut A."/>
            <person name="Hilbert H."/>
            <person name="Holsappel S."/>
            <person name="Hosono S."/>
            <person name="Hullo M.-F."/>
            <person name="Itaya M."/>
            <person name="Jones L.-M."/>
            <person name="Joris B."/>
            <person name="Karamata D."/>
            <person name="Kasahara Y."/>
            <person name="Klaerr-Blanchard M."/>
            <person name="Klein C."/>
            <person name="Kobayashi Y."/>
            <person name="Koetter P."/>
            <person name="Koningstein G."/>
            <person name="Krogh S."/>
            <person name="Kumano M."/>
            <person name="Kurita K."/>
            <person name="Lapidus A."/>
            <person name="Lardinois S."/>
            <person name="Lauber J."/>
            <person name="Lazarevic V."/>
            <person name="Lee S.-M."/>
            <person name="Levine A."/>
            <person name="Liu H."/>
            <person name="Masuda S."/>
            <person name="Mauel C."/>
            <person name="Medigue C."/>
            <person name="Medina N."/>
            <person name="Mellado R.P."/>
            <person name="Mizuno M."/>
            <person name="Moestl D."/>
            <person name="Nakai S."/>
            <person name="Noback M."/>
            <person name="Noone D."/>
            <person name="O'Reilly M."/>
            <person name="Ogawa K."/>
            <person name="Ogiwara A."/>
            <person name="Oudega B."/>
            <person name="Park S.-H."/>
            <person name="Parro V."/>
            <person name="Pohl T.M."/>
            <person name="Portetelle D."/>
            <person name="Porwollik S."/>
            <person name="Prescott A.M."/>
            <person name="Presecan E."/>
            <person name="Pujic P."/>
            <person name="Purnelle B."/>
            <person name="Rapoport G."/>
            <person name="Rey M."/>
            <person name="Reynolds S."/>
            <person name="Rieger M."/>
            <person name="Rivolta C."/>
            <person name="Rocha E."/>
            <person name="Roche B."/>
            <person name="Rose M."/>
            <person name="Sadaie Y."/>
            <person name="Sato T."/>
            <person name="Scanlan E."/>
            <person name="Schleich S."/>
            <person name="Schroeter R."/>
            <person name="Scoffone F."/>
            <person name="Sekiguchi J."/>
            <person name="Sekowska A."/>
            <person name="Seror S.J."/>
            <person name="Serror P."/>
            <person name="Shin B.-S."/>
            <person name="Soldo B."/>
            <person name="Sorokin A."/>
            <person name="Tacconi E."/>
            <person name="Takagi T."/>
            <person name="Takahashi H."/>
            <person name="Takemaru K."/>
            <person name="Takeuchi M."/>
            <person name="Tamakoshi A."/>
            <person name="Tanaka T."/>
            <person name="Terpstra P."/>
            <person name="Tognoni A."/>
            <person name="Tosato V."/>
            <person name="Uchiyama S."/>
            <person name="Vandenbol M."/>
            <person name="Vannier F."/>
            <person name="Vassarotti A."/>
            <person name="Viari A."/>
            <person name="Wambutt R."/>
            <person name="Wedler E."/>
            <person name="Wedler H."/>
            <person name="Weitzenegger T."/>
            <person name="Winters P."/>
            <person name="Wipat A."/>
            <person name="Yamamoto H."/>
            <person name="Yamane K."/>
            <person name="Yasumoto K."/>
            <person name="Yata K."/>
            <person name="Yoshida K."/>
            <person name="Yoshikawa H.-F."/>
            <person name="Zumstein E."/>
            <person name="Yoshikawa H."/>
            <person name="Danchin A."/>
        </authorList>
    </citation>
    <scope>NUCLEOTIDE SEQUENCE [LARGE SCALE GENOMIC DNA]</scope>
    <source>
        <strain>168</strain>
    </source>
</reference>
<reference key="4">
    <citation type="journal article" date="2005" name="FEMS Microbiol. Lett.">
        <title>The riboflavin kinase encoding gene ribR of Bacillus subtilis is a part of a 10 kb operon, which is negatively regulated by the yrzC gene product.</title>
        <authorList>
            <person name="Solovieva I.M."/>
            <person name="Kreneva R.A."/>
            <person name="Errais Lopes L."/>
            <person name="Perumov D.A."/>
        </authorList>
    </citation>
    <scope>FUNCTION</scope>
    <scope>DISRUPTION PHENOTYPE</scope>
</reference>
<reference key="5">
    <citation type="journal article" date="2007" name="FEMS Microbiol. Lett.">
        <title>RibR, a possible regulator of the Bacillus subtilis riboflavin biosynthetic operon, in vivo interacts with the 5'-untranslated leader of rib mRNA.</title>
        <authorList>
            <person name="Higashitsuji Y."/>
            <person name="Angerer A."/>
            <person name="Berghaus S."/>
            <person name="Hobl B."/>
            <person name="Mack M."/>
        </authorList>
    </citation>
    <scope>FUNCTION</scope>
    <scope>INDUCTION</scope>
</reference>